<sequence length="378" mass="42787">MNFTVKYSFLVICLLCCLLSTYVSVIEGHRARPGESRKNPREIIKTFKESGKGIIQGYYPSWVSYNHNLKDLNPNLNVVHMSFAKMDLSYDSIESIVGSPLLFKSLIGLEYIGLNEYFNDAMNLRKARPDIIMLLSLGGETYHPSSFDSALNAVEKIANLVDELGFDGIDVDYEPNGSFDGLNDKEKADFFVQYVTKLREYMCDDKLISISQSSNGALSCIGFNDPKKICMDDEAPYNSKYFNKPDVKKELLRAAQMASAGGAIYLMNNLKDMIDMVFVQTFNYTNSTDSTVMKELYDSYAYYGKKYDYVIIMGFTLMFPSTPFNPNDKMLVKSIGDFVKTENKLNKRADGFGLWSLSSDNAAHNEQLAIEYFVESLH</sequence>
<comment type="function">
    <text evidence="3 5 6 8">Endochitinase that cleaves beta-1,4-linkages between tri- and tetramers of N-acetylglucosamine (GlcNAc) from penta- and hexameric chitin oligomers (PubMed:10570198, PubMed:16088838, PubMed:35481637). Does not cleave smaller chitin oligosaccharides (PubMed:10570198). Required to cross the acellular, chitin-containing peritrophic matrix (PM) which is formed around the ingested blood meal in the mosquito midgut allowing the ookinete to invade the mosquito gut epithelium (PubMed:11349075).</text>
</comment>
<comment type="catalytic activity">
    <reaction evidence="3 6 8">
        <text>Random endo-hydrolysis of N-acetyl-beta-D-glucosaminide (1-&gt;4)-beta-linkages in chitin and chitodextrins.</text>
        <dbReference type="EC" id="3.2.1.14"/>
    </reaction>
</comment>
<comment type="activity regulation">
    <text evidence="3">Inhibited by allosamidin.</text>
</comment>
<comment type="biophysicochemical properties">
    <phDependence>
        <text evidence="3">Optimum pH is 5.</text>
    </phDependence>
</comment>
<comment type="subunit">
    <text evidence="7">Forms a hetero-multimeric, high molecular weight complex composed of at least CHT1, SOAP AND WARP (PubMed:33489941). Within the complex, may interact with WARP via a disulfide bond (PubMed:33489941).</text>
</comment>
<comment type="subcellular location">
    <subcellularLocation>
        <location evidence="7">Secreted</location>
    </subcellularLocation>
    <subcellularLocation>
        <location evidence="11 12 13">Cytoplasmic vesicle</location>
        <location evidence="11 12 13">Secretory vesicle</location>
        <location evidence="11 12 13">Microneme</location>
    </subcellularLocation>
    <text evidence="8">Enriched at the apical end of the ookinete.</text>
</comment>
<comment type="developmental stage">
    <text evidence="3 4 5 7">Expressed in the zygote (at protein level) (PubMed:11035760). Expressed in ookinetes (at protein level) (PubMed:10570198, PubMed:11035760, PubMed:11349075, PubMed:33489941).</text>
</comment>
<comment type="biotechnology">
    <text evidence="6">Potential target for the development of transmission blocking vaccines (PubMed:16088838). Antibodies against CHT1 neutralize CHT1 catalytic activity and when fed with the parasite prevent parasite development in the mosquito midgut (PubMed:16088838).</text>
</comment>
<comment type="similarity">
    <text evidence="2">Belongs to the glycosyl hydrolase 18 family.</text>
</comment>
<proteinExistence type="evidence at protein level"/>
<feature type="signal peptide" evidence="1">
    <location>
        <begin position="1"/>
        <end position="28"/>
    </location>
</feature>
<feature type="chain" id="PRO_5030176171" description="Chitinase" evidence="1">
    <location>
        <begin position="29"/>
        <end position="378"/>
    </location>
</feature>
<feature type="domain" description="GH18" evidence="2">
    <location>
        <begin position="53"/>
        <end position="378"/>
    </location>
</feature>
<feature type="active site" description="Proton donor" evidence="2">
    <location>
        <position position="174"/>
    </location>
</feature>
<feature type="disulfide bond" evidence="14">
    <location>
        <begin position="220"/>
        <end position="230"/>
    </location>
</feature>
<feature type="mutagenesis site" description="Increases catalytic activity and chitin binding. Loss of catalytic activity and chitin binding; when associated with S-220 and S-230." evidence="8">
    <original>C</original>
    <variation>S</variation>
    <location>
        <position position="203"/>
    </location>
</feature>
<feature type="mutagenesis site" description="Loss of catalytic activity. Loss of chitin binding. Loss of catalytic activity and chitin binding; when associated with S-203 and S-230." evidence="8">
    <original>C</original>
    <variation>S</variation>
    <location>
        <position position="220"/>
    </location>
</feature>
<feature type="mutagenesis site" description="Loss of catalytic activity. Loss of chitin binding. Loss of catalytic activity and chitin binding; when associated with S-203 and S-220." evidence="8">
    <original>C</original>
    <variation>S</variation>
    <location>
        <position position="230"/>
    </location>
</feature>
<feature type="mutagenesis site" description="Normal ookinete formation but the formation of oocysts in A.freeborni midguts is impaired. Loss of apical localization in the ookinete. Normal gametocytogenesis and exflagellation." evidence="5">
    <location>
        <begin position="366"/>
        <end position="378"/>
    </location>
</feature>
<reference evidence="15" key="1">
    <citation type="journal article" date="1999" name="Proc. Natl. Acad. Sci. U.S.A.">
        <title>The chitinase PfCHT1 from the human malaria parasite Plasmodium falciparum lacks proenzyme and chitin-binding domains and displays unique substrate preferences.</title>
        <authorList>
            <person name="Vinetz J.M."/>
            <person name="Dave S.K."/>
            <person name="Specht C.A."/>
            <person name="Brameld K.A."/>
            <person name="Kuntz I.D."/>
            <person name="Xu B."/>
            <person name="Hayward R."/>
            <person name="Fidock D.A."/>
        </authorList>
    </citation>
    <scope>NUCLEOTIDE SEQUENCE [GENOMIC DNA]</scope>
    <scope>FUNCTION</scope>
    <scope>CATALYTIC ACTIVITY</scope>
    <scope>ACTIVITY REGULATION</scope>
    <scope>BIOPHYSICOCHEMICAL PROPERTIES</scope>
    <scope>DEVELOPMENTAL STAGE</scope>
    <source>
        <strain evidence="9">K1</strain>
    </source>
</reference>
<reference evidence="17" key="2">
    <citation type="journal article" date="2002" name="Nature">
        <title>Genome sequence of the human malaria parasite Plasmodium falciparum.</title>
        <authorList>
            <person name="Gardner M.J."/>
            <person name="Hall N."/>
            <person name="Fung E."/>
            <person name="White O."/>
            <person name="Berriman M."/>
            <person name="Hyman R.W."/>
            <person name="Carlton J.M."/>
            <person name="Pain A."/>
            <person name="Nelson K.E."/>
            <person name="Bowman S."/>
            <person name="Paulsen I.T."/>
            <person name="James K.D."/>
            <person name="Eisen J.A."/>
            <person name="Rutherford K.M."/>
            <person name="Salzberg S.L."/>
            <person name="Craig A."/>
            <person name="Kyes S."/>
            <person name="Chan M.-S."/>
            <person name="Nene V."/>
            <person name="Shallom S.J."/>
            <person name="Suh B."/>
            <person name="Peterson J."/>
            <person name="Angiuoli S."/>
            <person name="Pertea M."/>
            <person name="Allen J."/>
            <person name="Selengut J."/>
            <person name="Haft D."/>
            <person name="Mather M.W."/>
            <person name="Vaidya A.B."/>
            <person name="Martin D.M.A."/>
            <person name="Fairlamb A.H."/>
            <person name="Fraunholz M.J."/>
            <person name="Roos D.S."/>
            <person name="Ralph S.A."/>
            <person name="McFadden G.I."/>
            <person name="Cummings L.M."/>
            <person name="Subramanian G.M."/>
            <person name="Mungall C."/>
            <person name="Venter J.C."/>
            <person name="Carucci D.J."/>
            <person name="Hoffman S.L."/>
            <person name="Newbold C."/>
            <person name="Davis R.W."/>
            <person name="Fraser C.M."/>
            <person name="Barrell B.G."/>
        </authorList>
    </citation>
    <scope>NUCLEOTIDE SEQUENCE [LARGE SCALE GENOMIC DNA]</scope>
    <source>
        <strain evidence="17">3D7</strain>
    </source>
</reference>
<reference evidence="10" key="3">
    <citation type="journal article" date="2000" name="Infect. Immun.">
        <title>Micronemal transport of Plasmodium ookinete chitinases to the electron-dense area of the apical complex for extracellular secretion.</title>
        <authorList>
            <person name="Langer R.C."/>
            <person name="Hayward R.E."/>
            <person name="Tsuboi T."/>
            <person name="Tachibana M."/>
            <person name="Torii M."/>
            <person name="Vinetz J.M."/>
        </authorList>
    </citation>
    <scope>SUBCELLULAR LOCATION</scope>
    <scope>DEVELOPMENTAL STAGE</scope>
</reference>
<reference evidence="10" key="4">
    <citation type="journal article" date="2001" name="Infect. Immun.">
        <title>Disruption of Plasmodium falciparum chitinase markedly impairs parasite invasion of mosquito midgut.</title>
        <authorList>
            <person name="Tsai Y.L."/>
            <person name="Hayward R.E."/>
            <person name="Langer R.C."/>
            <person name="Fidock D.A."/>
            <person name="Vinetz J.M."/>
        </authorList>
    </citation>
    <scope>FUNCTION</scope>
    <scope>SUBCELLULAR LOCATION</scope>
    <scope>DEVELOPMENTAL STAGE</scope>
    <scope>MUTAGENESIS OF 366-GLU--HIS-378</scope>
</reference>
<reference evidence="10" key="5">
    <citation type="journal article" date="2005" name="J. Infect. Dis.">
        <title>An anti-Chitinase malaria transmission-blocking single-chain antibody as an effector molecule for creating a Plasmodium falciparum-refractory mosquito.</title>
        <authorList>
            <person name="Li F."/>
            <person name="Patra K.P."/>
            <person name="Vinetz J.M."/>
        </authorList>
    </citation>
    <scope>FUNCTION</scope>
    <scope>CATALYTIC ACTIVITY</scope>
    <scope>BIOTECHNOLOGY</scope>
</reference>
<reference evidence="10" key="6">
    <citation type="journal article" date="2020" name="Front. Cell. Infect. Microbiol.">
        <title>A Hetero-Multimeric Chitinase-Containing Plasmodium falciparum and Plasmodium gallinaceum Ookinete-Secreted Protein Complex Involved in Mosquito Midgut Invasion.</title>
        <authorList>
            <person name="Patra K.P."/>
            <person name="Kaur H."/>
            <person name="Kolli S.K."/>
            <person name="Wozniak J.M."/>
            <person name="Prieto J.H."/>
            <person name="Yates J.R. III"/>
            <person name="Gonzalez D.J."/>
            <person name="Janse C.J."/>
            <person name="Vinetz J.M."/>
        </authorList>
    </citation>
    <scope>IDENTIFICATION IN A COMPLEX WITH SOAP AND WARP</scope>
    <scope>SUBCELLULAR LOCATION</scope>
    <scope>DEVELOPMENTAL STAGE</scope>
    <scope>IDENTIFICATION BY MASS SPECTROMETRY</scope>
</reference>
<reference evidence="10" key="7">
    <citation type="journal article" date="2022" name="Protein Sci.">
        <title>Structure-function analysis of cysteine residues in the plasmodium falciparum chitinase, PfCHT1.</title>
        <authorList>
            <person name="Kaur H."/>
            <person name="Garber L."/>
            <person name="Murphy J.W."/>
            <person name="Vinetz J.M."/>
        </authorList>
    </citation>
    <scope>FUNCTION</scope>
    <scope>CATALYTIC ACTIVITY</scope>
    <scope>SUBCELLULAR LOCATION</scope>
    <scope>DISULFIDE BOND</scope>
    <scope>MUTAGENESIS OF CYS-203; CYS-220 AND CYS-230</scope>
</reference>
<dbReference type="EC" id="3.2.1.14" evidence="3 6 8"/>
<dbReference type="EMBL" id="AF172445">
    <property type="protein sequence ID" value="AAF16902.1"/>
    <property type="molecule type" value="Genomic_DNA"/>
</dbReference>
<dbReference type="EMBL" id="LN999947">
    <property type="protein sequence ID" value="CZT99675.1"/>
    <property type="molecule type" value="Genomic_DNA"/>
</dbReference>
<dbReference type="RefSeq" id="XP_001350904.1">
    <property type="nucleotide sequence ID" value="XM_001350868.1"/>
</dbReference>
<dbReference type="FunCoup" id="Q8I4R4">
    <property type="interactions" value="12"/>
</dbReference>
<dbReference type="STRING" id="36329.Q8I4R4"/>
<dbReference type="CAZy" id="GH18">
    <property type="family name" value="Glycoside Hydrolase Family 18"/>
</dbReference>
<dbReference type="PaxDb" id="5833-PFL2510w"/>
<dbReference type="EnsemblProtists" id="CZT99675">
    <property type="protein sequence ID" value="CZT99675"/>
    <property type="gene ID" value="PF3D7_1252200"/>
</dbReference>
<dbReference type="GeneID" id="811552"/>
<dbReference type="KEGG" id="pfa:PF3D7_1252200"/>
<dbReference type="VEuPathDB" id="PlasmoDB:PF3D7_1252200"/>
<dbReference type="VEuPathDB" id="PlasmoDB:Pf7G8-2_000401400"/>
<dbReference type="VEuPathDB" id="PlasmoDB:Pf7G8_120057900"/>
<dbReference type="VEuPathDB" id="PlasmoDB:PfCD01_120057000"/>
<dbReference type="VEuPathDB" id="PlasmoDB:PfDd2_120057400"/>
<dbReference type="VEuPathDB" id="PlasmoDB:PfGA01_120057500"/>
<dbReference type="VEuPathDB" id="PlasmoDB:PfGB4_120057400"/>
<dbReference type="VEuPathDB" id="PlasmoDB:PfGN01_120058400"/>
<dbReference type="VEuPathDB" id="PlasmoDB:PfHB3_120057000"/>
<dbReference type="VEuPathDB" id="PlasmoDB:PfIT_120057400"/>
<dbReference type="VEuPathDB" id="PlasmoDB:PfKE01_120057500"/>
<dbReference type="VEuPathDB" id="PlasmoDB:PfKH01_120058300"/>
<dbReference type="VEuPathDB" id="PlasmoDB:PfKH02_120056900"/>
<dbReference type="VEuPathDB" id="PlasmoDB:PfML01_120058300"/>
<dbReference type="VEuPathDB" id="PlasmoDB:PfNF135_120056600"/>
<dbReference type="VEuPathDB" id="PlasmoDB:PfNF166_120057800"/>
<dbReference type="VEuPathDB" id="PlasmoDB:PfNF54_120056000"/>
<dbReference type="VEuPathDB" id="PlasmoDB:PfSD01_120056900"/>
<dbReference type="VEuPathDB" id="PlasmoDB:PfSN01_120057600"/>
<dbReference type="VEuPathDB" id="PlasmoDB:PfTG01_120057200"/>
<dbReference type="HOGENOM" id="CLU_732544_0_0_1"/>
<dbReference type="InParanoid" id="Q8I4R4"/>
<dbReference type="OMA" id="EYMCEDK"/>
<dbReference type="OrthoDB" id="76388at2759"/>
<dbReference type="PhylomeDB" id="Q8I4R4"/>
<dbReference type="Reactome" id="R-PFA-189085">
    <property type="pathway name" value="Digestion of dietary carbohydrate"/>
</dbReference>
<dbReference type="Reactome" id="R-PFA-6798695">
    <property type="pathway name" value="Neutrophil degranulation"/>
</dbReference>
<dbReference type="Proteomes" id="UP000001450">
    <property type="component" value="Chromosome 12"/>
</dbReference>
<dbReference type="GO" id="GO:0031410">
    <property type="term" value="C:cytoplasmic vesicle"/>
    <property type="evidence" value="ECO:0007669"/>
    <property type="project" value="UniProtKB-KW"/>
</dbReference>
<dbReference type="GO" id="GO:0005576">
    <property type="term" value="C:extracellular region"/>
    <property type="evidence" value="ECO:0000318"/>
    <property type="project" value="GO_Central"/>
</dbReference>
<dbReference type="GO" id="GO:0020009">
    <property type="term" value="C:microneme"/>
    <property type="evidence" value="ECO:0000314"/>
    <property type="project" value="GeneDB"/>
</dbReference>
<dbReference type="GO" id="GO:0008061">
    <property type="term" value="F:chitin binding"/>
    <property type="evidence" value="ECO:0000314"/>
    <property type="project" value="GeneDB"/>
</dbReference>
<dbReference type="GO" id="GO:0004568">
    <property type="term" value="F:chitinase activity"/>
    <property type="evidence" value="ECO:0000314"/>
    <property type="project" value="GeneDB"/>
</dbReference>
<dbReference type="GO" id="GO:0008843">
    <property type="term" value="F:endochitinase activity"/>
    <property type="evidence" value="ECO:0007669"/>
    <property type="project" value="UniProtKB-EC"/>
</dbReference>
<dbReference type="GO" id="GO:0006032">
    <property type="term" value="P:chitin catabolic process"/>
    <property type="evidence" value="ECO:0000314"/>
    <property type="project" value="GeneDB"/>
</dbReference>
<dbReference type="GO" id="GO:0000272">
    <property type="term" value="P:polysaccharide catabolic process"/>
    <property type="evidence" value="ECO:0007669"/>
    <property type="project" value="UniProtKB-KW"/>
</dbReference>
<dbReference type="Gene3D" id="3.20.20.80">
    <property type="entry name" value="Glycosidases"/>
    <property type="match status" value="1"/>
</dbReference>
<dbReference type="InterPro" id="IPR011583">
    <property type="entry name" value="Chitinase_II/V-like_cat"/>
</dbReference>
<dbReference type="InterPro" id="IPR001223">
    <property type="entry name" value="Glyco_hydro18_cat"/>
</dbReference>
<dbReference type="InterPro" id="IPR017853">
    <property type="entry name" value="Glycoside_hydrolase_SF"/>
</dbReference>
<dbReference type="Pfam" id="PF00704">
    <property type="entry name" value="Glyco_hydro_18"/>
    <property type="match status" value="1"/>
</dbReference>
<dbReference type="SMART" id="SM00636">
    <property type="entry name" value="Glyco_18"/>
    <property type="match status" value="1"/>
</dbReference>
<dbReference type="SUPFAM" id="SSF51445">
    <property type="entry name" value="(Trans)glycosidases"/>
    <property type="match status" value="1"/>
</dbReference>
<dbReference type="PROSITE" id="PS01095">
    <property type="entry name" value="GH18_1"/>
    <property type="match status" value="1"/>
</dbReference>
<dbReference type="PROSITE" id="PS51910">
    <property type="entry name" value="GH18_2"/>
    <property type="match status" value="1"/>
</dbReference>
<gene>
    <name evidence="9" type="primary">CHT1</name>
    <name evidence="16" type="ORF">PF3D7_1252200</name>
</gene>
<evidence type="ECO:0000255" key="1"/>
<evidence type="ECO:0000255" key="2">
    <source>
        <dbReference type="PROSITE-ProRule" id="PRU01258"/>
    </source>
</evidence>
<evidence type="ECO:0000269" key="3">
    <source>
    </source>
</evidence>
<evidence type="ECO:0000269" key="4">
    <source>
    </source>
</evidence>
<evidence type="ECO:0000269" key="5">
    <source>
    </source>
</evidence>
<evidence type="ECO:0000269" key="6">
    <source>
    </source>
</evidence>
<evidence type="ECO:0000269" key="7">
    <source>
    </source>
</evidence>
<evidence type="ECO:0000269" key="8">
    <source>
    </source>
</evidence>
<evidence type="ECO:0000303" key="9">
    <source>
    </source>
</evidence>
<evidence type="ECO:0000305" key="10"/>
<evidence type="ECO:0000305" key="11">
    <source>
    </source>
</evidence>
<evidence type="ECO:0000305" key="12">
    <source>
    </source>
</evidence>
<evidence type="ECO:0000305" key="13">
    <source>
    </source>
</evidence>
<evidence type="ECO:0000305" key="14">
    <source>
    </source>
</evidence>
<evidence type="ECO:0000312" key="15">
    <source>
        <dbReference type="EMBL" id="AAF16902.1"/>
    </source>
</evidence>
<evidence type="ECO:0000312" key="16">
    <source>
        <dbReference type="EMBL" id="CZT99675.1"/>
    </source>
</evidence>
<evidence type="ECO:0000312" key="17">
    <source>
        <dbReference type="Proteomes" id="UP000001450"/>
    </source>
</evidence>
<keyword id="KW-0119">Carbohydrate metabolism</keyword>
<keyword id="KW-0146">Chitin degradation</keyword>
<keyword id="KW-0968">Cytoplasmic vesicle</keyword>
<keyword id="KW-1015">Disulfide bond</keyword>
<keyword id="KW-0326">Glycosidase</keyword>
<keyword id="KW-0378">Hydrolase</keyword>
<keyword id="KW-0624">Polysaccharide degradation</keyword>
<keyword id="KW-1185">Reference proteome</keyword>
<keyword id="KW-0964">Secreted</keyword>
<keyword id="KW-0732">Signal</keyword>
<name>CHIT_PLAF7</name>
<protein>
    <recommendedName>
        <fullName evidence="9">Chitinase</fullName>
        <shortName evidence="9">PfCHT1</shortName>
        <ecNumber evidence="3 6 8">3.2.1.14</ecNumber>
    </recommendedName>
</protein>
<accession>Q8I4R4</accession>
<accession>Q9U4I9</accession>
<organism evidence="17">
    <name type="scientific">Plasmodium falciparum (isolate 3D7)</name>
    <dbReference type="NCBI Taxonomy" id="36329"/>
    <lineage>
        <taxon>Eukaryota</taxon>
        <taxon>Sar</taxon>
        <taxon>Alveolata</taxon>
        <taxon>Apicomplexa</taxon>
        <taxon>Aconoidasida</taxon>
        <taxon>Haemosporida</taxon>
        <taxon>Plasmodiidae</taxon>
        <taxon>Plasmodium</taxon>
        <taxon>Plasmodium (Laverania)</taxon>
    </lineage>
</organism>